<sequence length="56" mass="6373">MFFGVGHAGRAQIYDKTSEKRLKHAFKPKVTDEAGGWHGVCRAELRVYAVLYLHRA</sequence>
<dbReference type="EMBL" id="AL009126">
    <property type="protein sequence ID" value="CAX52607.1"/>
    <property type="molecule type" value="Genomic_DNA"/>
</dbReference>
<dbReference type="RefSeq" id="WP_003232568.1">
    <property type="nucleotide sequence ID" value="NZ_OZ025638.1"/>
</dbReference>
<dbReference type="RefSeq" id="YP_003097717.1">
    <property type="nucleotide sequence ID" value="NC_000964.3"/>
</dbReference>
<dbReference type="FunCoup" id="C0H400">
    <property type="interactions" value="27"/>
</dbReference>
<dbReference type="STRING" id="224308.BSU13169"/>
<dbReference type="PaxDb" id="224308-BSU13169"/>
<dbReference type="EnsemblBacteria" id="CAX52607">
    <property type="protein sequence ID" value="CAX52607"/>
    <property type="gene ID" value="BSU_13169"/>
</dbReference>
<dbReference type="GeneID" id="8302905"/>
<dbReference type="KEGG" id="bsu:BSU13169"/>
<dbReference type="PATRIC" id="fig|224308.179.peg.1429"/>
<dbReference type="InParanoid" id="C0H400"/>
<dbReference type="OrthoDB" id="9857848at2"/>
<dbReference type="BioCyc" id="BSUB:BSU13169-MONOMER"/>
<dbReference type="Proteomes" id="UP000001570">
    <property type="component" value="Chromosome"/>
</dbReference>
<gene>
    <name type="primary">ykzN</name>
    <name type="ordered locus">BSU13169</name>
</gene>
<keyword id="KW-1185">Reference proteome</keyword>
<proteinExistence type="predicted"/>
<accession>C0H400</accession>
<reference key="1">
    <citation type="journal article" date="1997" name="Nature">
        <title>The complete genome sequence of the Gram-positive bacterium Bacillus subtilis.</title>
        <authorList>
            <person name="Kunst F."/>
            <person name="Ogasawara N."/>
            <person name="Moszer I."/>
            <person name="Albertini A.M."/>
            <person name="Alloni G."/>
            <person name="Azevedo V."/>
            <person name="Bertero M.G."/>
            <person name="Bessieres P."/>
            <person name="Bolotin A."/>
            <person name="Borchert S."/>
            <person name="Borriss R."/>
            <person name="Boursier L."/>
            <person name="Brans A."/>
            <person name="Braun M."/>
            <person name="Brignell S.C."/>
            <person name="Bron S."/>
            <person name="Brouillet S."/>
            <person name="Bruschi C.V."/>
            <person name="Caldwell B."/>
            <person name="Capuano V."/>
            <person name="Carter N.M."/>
            <person name="Choi S.-K."/>
            <person name="Codani J.-J."/>
            <person name="Connerton I.F."/>
            <person name="Cummings N.J."/>
            <person name="Daniel R.A."/>
            <person name="Denizot F."/>
            <person name="Devine K.M."/>
            <person name="Duesterhoeft A."/>
            <person name="Ehrlich S.D."/>
            <person name="Emmerson P.T."/>
            <person name="Entian K.-D."/>
            <person name="Errington J."/>
            <person name="Fabret C."/>
            <person name="Ferrari E."/>
            <person name="Foulger D."/>
            <person name="Fritz C."/>
            <person name="Fujita M."/>
            <person name="Fujita Y."/>
            <person name="Fuma S."/>
            <person name="Galizzi A."/>
            <person name="Galleron N."/>
            <person name="Ghim S.-Y."/>
            <person name="Glaser P."/>
            <person name="Goffeau A."/>
            <person name="Golightly E.J."/>
            <person name="Grandi G."/>
            <person name="Guiseppi G."/>
            <person name="Guy B.J."/>
            <person name="Haga K."/>
            <person name="Haiech J."/>
            <person name="Harwood C.R."/>
            <person name="Henaut A."/>
            <person name="Hilbert H."/>
            <person name="Holsappel S."/>
            <person name="Hosono S."/>
            <person name="Hullo M.-F."/>
            <person name="Itaya M."/>
            <person name="Jones L.-M."/>
            <person name="Joris B."/>
            <person name="Karamata D."/>
            <person name="Kasahara Y."/>
            <person name="Klaerr-Blanchard M."/>
            <person name="Klein C."/>
            <person name="Kobayashi Y."/>
            <person name="Koetter P."/>
            <person name="Koningstein G."/>
            <person name="Krogh S."/>
            <person name="Kumano M."/>
            <person name="Kurita K."/>
            <person name="Lapidus A."/>
            <person name="Lardinois S."/>
            <person name="Lauber J."/>
            <person name="Lazarevic V."/>
            <person name="Lee S.-M."/>
            <person name="Levine A."/>
            <person name="Liu H."/>
            <person name="Masuda S."/>
            <person name="Mauel C."/>
            <person name="Medigue C."/>
            <person name="Medina N."/>
            <person name="Mellado R.P."/>
            <person name="Mizuno M."/>
            <person name="Moestl D."/>
            <person name="Nakai S."/>
            <person name="Noback M."/>
            <person name="Noone D."/>
            <person name="O'Reilly M."/>
            <person name="Ogawa K."/>
            <person name="Ogiwara A."/>
            <person name="Oudega B."/>
            <person name="Park S.-H."/>
            <person name="Parro V."/>
            <person name="Pohl T.M."/>
            <person name="Portetelle D."/>
            <person name="Porwollik S."/>
            <person name="Prescott A.M."/>
            <person name="Presecan E."/>
            <person name="Pujic P."/>
            <person name="Purnelle B."/>
            <person name="Rapoport G."/>
            <person name="Rey M."/>
            <person name="Reynolds S."/>
            <person name="Rieger M."/>
            <person name="Rivolta C."/>
            <person name="Rocha E."/>
            <person name="Roche B."/>
            <person name="Rose M."/>
            <person name="Sadaie Y."/>
            <person name="Sato T."/>
            <person name="Scanlan E."/>
            <person name="Schleich S."/>
            <person name="Schroeter R."/>
            <person name="Scoffone F."/>
            <person name="Sekiguchi J."/>
            <person name="Sekowska A."/>
            <person name="Seror S.J."/>
            <person name="Serror P."/>
            <person name="Shin B.-S."/>
            <person name="Soldo B."/>
            <person name="Sorokin A."/>
            <person name="Tacconi E."/>
            <person name="Takagi T."/>
            <person name="Takahashi H."/>
            <person name="Takemaru K."/>
            <person name="Takeuchi M."/>
            <person name="Tamakoshi A."/>
            <person name="Tanaka T."/>
            <person name="Terpstra P."/>
            <person name="Tognoni A."/>
            <person name="Tosato V."/>
            <person name="Uchiyama S."/>
            <person name="Vandenbol M."/>
            <person name="Vannier F."/>
            <person name="Vassarotti A."/>
            <person name="Viari A."/>
            <person name="Wambutt R."/>
            <person name="Wedler E."/>
            <person name="Wedler H."/>
            <person name="Weitzenegger T."/>
            <person name="Winters P."/>
            <person name="Wipat A."/>
            <person name="Yamamoto H."/>
            <person name="Yamane K."/>
            <person name="Yasumoto K."/>
            <person name="Yata K."/>
            <person name="Yoshida K."/>
            <person name="Yoshikawa H.-F."/>
            <person name="Zumstein E."/>
            <person name="Yoshikawa H."/>
            <person name="Danchin A."/>
        </authorList>
    </citation>
    <scope>NUCLEOTIDE SEQUENCE [LARGE SCALE GENOMIC DNA]</scope>
    <source>
        <strain>168</strain>
    </source>
</reference>
<protein>
    <recommendedName>
        <fullName>Uncharacterized protein YkzN</fullName>
    </recommendedName>
</protein>
<feature type="chain" id="PRO_0000382664" description="Uncharacterized protein YkzN">
    <location>
        <begin position="1"/>
        <end position="56"/>
    </location>
</feature>
<name>YKZN_BACSU</name>
<organism>
    <name type="scientific">Bacillus subtilis (strain 168)</name>
    <dbReference type="NCBI Taxonomy" id="224308"/>
    <lineage>
        <taxon>Bacteria</taxon>
        <taxon>Bacillati</taxon>
        <taxon>Bacillota</taxon>
        <taxon>Bacilli</taxon>
        <taxon>Bacillales</taxon>
        <taxon>Bacillaceae</taxon>
        <taxon>Bacillus</taxon>
    </lineage>
</organism>